<name>MTNA_DROPE</name>
<sequence length="362" mass="38958">MSLQSIKYTRGSLEILDQLLLPVQSKYLPVRGVEDGWKVINKMQVRGAPAIAIVGCLSLAVEIHPEEFDSKKSLRQELEGKLNYLVSARPTAVNMKMAADELLSLANDLTKDDNVDVAAMKQRFLNATEAMLKKDIADNRAIGAHGAKAILQLVAAAAGAPMAGPVRVLTHCNTGSLATAGYGTALGVVRQLSELGKLEHIYCTETRPYNQGARLTAYELVHEKFPATLVLDSMVAALLRAKNVAAVVVGADRVAANGDTANKIGTYQIAVVAKHHGVPFFVAAPLTSIDLHIPSGDHIIIEERPDREMTHVGEHRIAAPGINCWNPAFDVTPASLITGIITERGVFQPAQLKETITKLLET</sequence>
<feature type="chain" id="PRO_0000401980" description="Methylthioribose-1-phosphate isomerase">
    <location>
        <begin position="1"/>
        <end position="362"/>
    </location>
</feature>
<feature type="active site" description="Proton donor" evidence="1">
    <location>
        <position position="252"/>
    </location>
</feature>
<feature type="site" description="Transition state stabilizer" evidence="1">
    <location>
        <position position="172"/>
    </location>
</feature>
<protein>
    <recommendedName>
        <fullName evidence="1">Methylthioribose-1-phosphate isomerase</fullName>
        <shortName evidence="1">M1Pi</shortName>
        <shortName evidence="1">MTR-1-P isomerase</shortName>
        <ecNumber evidence="1">5.3.1.23</ecNumber>
    </recommendedName>
    <alternativeName>
        <fullName evidence="1">S-methyl-5-thioribose-1-phosphate isomerase</fullName>
    </alternativeName>
    <alternativeName>
        <fullName evidence="1">Translation initiation factor eIF-2B subunit alpha/beta/delta-like protein</fullName>
    </alternativeName>
</protein>
<accession>B4GYU1</accession>
<organism>
    <name type="scientific">Drosophila persimilis</name>
    <name type="common">Fruit fly</name>
    <dbReference type="NCBI Taxonomy" id="7234"/>
    <lineage>
        <taxon>Eukaryota</taxon>
        <taxon>Metazoa</taxon>
        <taxon>Ecdysozoa</taxon>
        <taxon>Arthropoda</taxon>
        <taxon>Hexapoda</taxon>
        <taxon>Insecta</taxon>
        <taxon>Pterygota</taxon>
        <taxon>Neoptera</taxon>
        <taxon>Endopterygota</taxon>
        <taxon>Diptera</taxon>
        <taxon>Brachycera</taxon>
        <taxon>Muscomorpha</taxon>
        <taxon>Ephydroidea</taxon>
        <taxon>Drosophilidae</taxon>
        <taxon>Drosophila</taxon>
        <taxon>Sophophora</taxon>
    </lineage>
</organism>
<keyword id="KW-0028">Amino-acid biosynthesis</keyword>
<keyword id="KW-0963">Cytoplasm</keyword>
<keyword id="KW-0413">Isomerase</keyword>
<keyword id="KW-0486">Methionine biosynthesis</keyword>
<keyword id="KW-0539">Nucleus</keyword>
<keyword id="KW-1185">Reference proteome</keyword>
<gene>
    <name type="ORF">GL27236</name>
</gene>
<dbReference type="EC" id="5.3.1.23" evidence="1"/>
<dbReference type="EMBL" id="CH479198">
    <property type="protein sequence ID" value="EDW27959.1"/>
    <property type="molecule type" value="Genomic_DNA"/>
</dbReference>
<dbReference type="SMR" id="B4GYU1"/>
<dbReference type="STRING" id="7234.B4GYU1"/>
<dbReference type="EnsemblMetazoa" id="FBtr0192851">
    <property type="protein sequence ID" value="FBpp0191343"/>
    <property type="gene ID" value="FBgn0164817"/>
</dbReference>
<dbReference type="EnsemblMetazoa" id="XM_002023720.2">
    <property type="protein sequence ID" value="XP_002023756.1"/>
    <property type="gene ID" value="LOC6598669"/>
</dbReference>
<dbReference type="EnsemblMetazoa" id="XM_026994991.1">
    <property type="protein sequence ID" value="XP_026850792.1"/>
    <property type="gene ID" value="LOC6598669"/>
</dbReference>
<dbReference type="GeneID" id="6598669"/>
<dbReference type="KEGG" id="dpe:6598669"/>
<dbReference type="eggNOG" id="KOG1468">
    <property type="taxonomic scope" value="Eukaryota"/>
</dbReference>
<dbReference type="HOGENOM" id="CLU_016218_1_3_1"/>
<dbReference type="OMA" id="CETRPLN"/>
<dbReference type="OrthoDB" id="2461at2759"/>
<dbReference type="PhylomeDB" id="B4GYU1"/>
<dbReference type="UniPathway" id="UPA00904">
    <property type="reaction ID" value="UER00874"/>
</dbReference>
<dbReference type="Proteomes" id="UP000008744">
    <property type="component" value="Unassembled WGS sequence"/>
</dbReference>
<dbReference type="GO" id="GO:0005737">
    <property type="term" value="C:cytoplasm"/>
    <property type="evidence" value="ECO:0007669"/>
    <property type="project" value="UniProtKB-SubCell"/>
</dbReference>
<dbReference type="GO" id="GO:0005634">
    <property type="term" value="C:nucleus"/>
    <property type="evidence" value="ECO:0007669"/>
    <property type="project" value="UniProtKB-SubCell"/>
</dbReference>
<dbReference type="GO" id="GO:0046523">
    <property type="term" value="F:S-methyl-5-thioribose-1-phosphate isomerase activity"/>
    <property type="evidence" value="ECO:0007669"/>
    <property type="project" value="UniProtKB-UniRule"/>
</dbReference>
<dbReference type="GO" id="GO:0019509">
    <property type="term" value="P:L-methionine salvage from methylthioadenosine"/>
    <property type="evidence" value="ECO:0007669"/>
    <property type="project" value="UniProtKB-UniRule"/>
</dbReference>
<dbReference type="FunFam" id="1.20.120.420:FF:000010">
    <property type="entry name" value="Methylthioribose-1-phosphate isomerase"/>
    <property type="match status" value="1"/>
</dbReference>
<dbReference type="FunFam" id="3.40.50.10470:FF:000003">
    <property type="entry name" value="Methylthioribose-1-phosphate isomerase"/>
    <property type="match status" value="1"/>
</dbReference>
<dbReference type="Gene3D" id="1.20.120.420">
    <property type="entry name" value="translation initiation factor eif-2b, domain 1"/>
    <property type="match status" value="1"/>
</dbReference>
<dbReference type="Gene3D" id="3.40.50.10470">
    <property type="entry name" value="Translation initiation factor eif-2b, domain 2"/>
    <property type="match status" value="1"/>
</dbReference>
<dbReference type="HAMAP" id="MF_01678">
    <property type="entry name" value="Salvage_MtnA"/>
    <property type="match status" value="1"/>
</dbReference>
<dbReference type="InterPro" id="IPR000649">
    <property type="entry name" value="IF-2B-related"/>
</dbReference>
<dbReference type="InterPro" id="IPR005251">
    <property type="entry name" value="IF-M1Pi"/>
</dbReference>
<dbReference type="InterPro" id="IPR042529">
    <property type="entry name" value="IF_2B-like_C"/>
</dbReference>
<dbReference type="InterPro" id="IPR011559">
    <property type="entry name" value="Initiation_fac_2B_a/b/d"/>
</dbReference>
<dbReference type="InterPro" id="IPR027363">
    <property type="entry name" value="M1Pi_N"/>
</dbReference>
<dbReference type="InterPro" id="IPR037171">
    <property type="entry name" value="NagB/RpiA_transferase-like"/>
</dbReference>
<dbReference type="NCBIfam" id="TIGR00524">
    <property type="entry name" value="eIF-2B_rel"/>
    <property type="match status" value="1"/>
</dbReference>
<dbReference type="NCBIfam" id="NF004326">
    <property type="entry name" value="PRK05720.1"/>
    <property type="match status" value="1"/>
</dbReference>
<dbReference type="NCBIfam" id="TIGR00512">
    <property type="entry name" value="salvage_mtnA"/>
    <property type="match status" value="1"/>
</dbReference>
<dbReference type="PANTHER" id="PTHR43475">
    <property type="entry name" value="METHYLTHIORIBOSE-1-PHOSPHATE ISOMERASE"/>
    <property type="match status" value="1"/>
</dbReference>
<dbReference type="PANTHER" id="PTHR43475:SF1">
    <property type="entry name" value="METHYLTHIORIBOSE-1-PHOSPHATE ISOMERASE"/>
    <property type="match status" value="1"/>
</dbReference>
<dbReference type="Pfam" id="PF01008">
    <property type="entry name" value="IF-2B"/>
    <property type="match status" value="1"/>
</dbReference>
<dbReference type="SUPFAM" id="SSF100950">
    <property type="entry name" value="NagB/RpiA/CoA transferase-like"/>
    <property type="match status" value="1"/>
</dbReference>
<comment type="function">
    <text evidence="1">Catalyzes the interconversion of methylthioribose-1-phosphate (MTR-1-P) into methylthioribulose-1-phosphate (MTRu-1-P).</text>
</comment>
<comment type="catalytic activity">
    <reaction evidence="1">
        <text>5-(methylsulfanyl)-alpha-D-ribose 1-phosphate = 5-(methylsulfanyl)-D-ribulose 1-phosphate</text>
        <dbReference type="Rhea" id="RHEA:19989"/>
        <dbReference type="ChEBI" id="CHEBI:58533"/>
        <dbReference type="ChEBI" id="CHEBI:58548"/>
        <dbReference type="EC" id="5.3.1.23"/>
    </reaction>
</comment>
<comment type="pathway">
    <text evidence="1">Amino-acid biosynthesis; L-methionine biosynthesis via salvage pathway; L-methionine from S-methyl-5-thio-alpha-D-ribose 1-phosphate: step 1/6.</text>
</comment>
<comment type="subcellular location">
    <subcellularLocation>
        <location evidence="1">Cytoplasm</location>
    </subcellularLocation>
    <subcellularLocation>
        <location evidence="1">Nucleus</location>
    </subcellularLocation>
</comment>
<comment type="similarity">
    <text evidence="1">Belongs to the eIF-2B alpha/beta/delta subunits family. MtnA subfamily.</text>
</comment>
<evidence type="ECO:0000255" key="1">
    <source>
        <dbReference type="HAMAP-Rule" id="MF_03119"/>
    </source>
</evidence>
<reference key="1">
    <citation type="journal article" date="2007" name="Nature">
        <title>Evolution of genes and genomes on the Drosophila phylogeny.</title>
        <authorList>
            <consortium name="Drosophila 12 genomes consortium"/>
        </authorList>
    </citation>
    <scope>NUCLEOTIDE SEQUENCE [LARGE SCALE GENOMIC DNA]</scope>
    <source>
        <strain>MSH-3 / Tucson 14011-0111.49</strain>
    </source>
</reference>
<proteinExistence type="inferred from homology"/>